<dbReference type="EC" id="2.1.2.10" evidence="1"/>
<dbReference type="EMBL" id="CP001186">
    <property type="protein sequence ID" value="ACK93972.1"/>
    <property type="molecule type" value="Genomic_DNA"/>
</dbReference>
<dbReference type="RefSeq" id="WP_000631776.1">
    <property type="nucleotide sequence ID" value="NC_011772.1"/>
</dbReference>
<dbReference type="SMR" id="B7IXL4"/>
<dbReference type="KEGG" id="bcg:BCG9842_B0901"/>
<dbReference type="HOGENOM" id="CLU_007884_10_2_9"/>
<dbReference type="Proteomes" id="UP000006744">
    <property type="component" value="Chromosome"/>
</dbReference>
<dbReference type="GO" id="GO:0005829">
    <property type="term" value="C:cytosol"/>
    <property type="evidence" value="ECO:0007669"/>
    <property type="project" value="TreeGrafter"/>
</dbReference>
<dbReference type="GO" id="GO:0005960">
    <property type="term" value="C:glycine cleavage complex"/>
    <property type="evidence" value="ECO:0007669"/>
    <property type="project" value="InterPro"/>
</dbReference>
<dbReference type="GO" id="GO:0004047">
    <property type="term" value="F:aminomethyltransferase activity"/>
    <property type="evidence" value="ECO:0007669"/>
    <property type="project" value="UniProtKB-UniRule"/>
</dbReference>
<dbReference type="GO" id="GO:0008483">
    <property type="term" value="F:transaminase activity"/>
    <property type="evidence" value="ECO:0007669"/>
    <property type="project" value="UniProtKB-KW"/>
</dbReference>
<dbReference type="GO" id="GO:0019464">
    <property type="term" value="P:glycine decarboxylation via glycine cleavage system"/>
    <property type="evidence" value="ECO:0007669"/>
    <property type="project" value="UniProtKB-UniRule"/>
</dbReference>
<dbReference type="FunFam" id="2.40.30.110:FF:000003">
    <property type="entry name" value="Aminomethyltransferase"/>
    <property type="match status" value="1"/>
</dbReference>
<dbReference type="FunFam" id="3.30.70.1400:FF:000001">
    <property type="entry name" value="Aminomethyltransferase"/>
    <property type="match status" value="1"/>
</dbReference>
<dbReference type="FunFam" id="4.10.1250.10:FF:000001">
    <property type="entry name" value="Aminomethyltransferase"/>
    <property type="match status" value="1"/>
</dbReference>
<dbReference type="Gene3D" id="2.40.30.110">
    <property type="entry name" value="Aminomethyltransferase beta-barrel domains"/>
    <property type="match status" value="1"/>
</dbReference>
<dbReference type="Gene3D" id="3.30.70.1400">
    <property type="entry name" value="Aminomethyltransferase beta-barrel domains"/>
    <property type="match status" value="1"/>
</dbReference>
<dbReference type="Gene3D" id="4.10.1250.10">
    <property type="entry name" value="Aminomethyltransferase fragment"/>
    <property type="match status" value="1"/>
</dbReference>
<dbReference type="Gene3D" id="3.30.1360.120">
    <property type="entry name" value="Probable tRNA modification gtpase trme, domain 1"/>
    <property type="match status" value="1"/>
</dbReference>
<dbReference type="HAMAP" id="MF_00259">
    <property type="entry name" value="GcvT"/>
    <property type="match status" value="1"/>
</dbReference>
<dbReference type="InterPro" id="IPR006223">
    <property type="entry name" value="GCS_T"/>
</dbReference>
<dbReference type="InterPro" id="IPR022903">
    <property type="entry name" value="GCS_T_bac"/>
</dbReference>
<dbReference type="InterPro" id="IPR013977">
    <property type="entry name" value="GCST_C"/>
</dbReference>
<dbReference type="InterPro" id="IPR006222">
    <property type="entry name" value="GCV_T_N"/>
</dbReference>
<dbReference type="InterPro" id="IPR028896">
    <property type="entry name" value="GcvT/YgfZ/DmdA"/>
</dbReference>
<dbReference type="InterPro" id="IPR029043">
    <property type="entry name" value="GcvT/YgfZ_C"/>
</dbReference>
<dbReference type="InterPro" id="IPR027266">
    <property type="entry name" value="TrmE/GcvT_dom1"/>
</dbReference>
<dbReference type="NCBIfam" id="TIGR00528">
    <property type="entry name" value="gcvT"/>
    <property type="match status" value="1"/>
</dbReference>
<dbReference type="NCBIfam" id="NF001567">
    <property type="entry name" value="PRK00389.1"/>
    <property type="match status" value="1"/>
</dbReference>
<dbReference type="PANTHER" id="PTHR43757">
    <property type="entry name" value="AMINOMETHYLTRANSFERASE"/>
    <property type="match status" value="1"/>
</dbReference>
<dbReference type="PANTHER" id="PTHR43757:SF2">
    <property type="entry name" value="AMINOMETHYLTRANSFERASE, MITOCHONDRIAL"/>
    <property type="match status" value="1"/>
</dbReference>
<dbReference type="Pfam" id="PF01571">
    <property type="entry name" value="GCV_T"/>
    <property type="match status" value="1"/>
</dbReference>
<dbReference type="Pfam" id="PF08669">
    <property type="entry name" value="GCV_T_C"/>
    <property type="match status" value="1"/>
</dbReference>
<dbReference type="PIRSF" id="PIRSF006487">
    <property type="entry name" value="GcvT"/>
    <property type="match status" value="1"/>
</dbReference>
<dbReference type="SUPFAM" id="SSF101790">
    <property type="entry name" value="Aminomethyltransferase beta-barrel domain"/>
    <property type="match status" value="1"/>
</dbReference>
<dbReference type="SUPFAM" id="SSF103025">
    <property type="entry name" value="Folate-binding domain"/>
    <property type="match status" value="1"/>
</dbReference>
<reference key="1">
    <citation type="submission" date="2008-10" db="EMBL/GenBank/DDBJ databases">
        <title>Genome sequence of Bacillus cereus G9842.</title>
        <authorList>
            <person name="Dodson R.J."/>
            <person name="Durkin A.S."/>
            <person name="Rosovitz M.J."/>
            <person name="Rasko D.A."/>
            <person name="Hoffmaster A."/>
            <person name="Ravel J."/>
            <person name="Sutton G."/>
        </authorList>
    </citation>
    <scope>NUCLEOTIDE SEQUENCE [LARGE SCALE GENOMIC DNA]</scope>
    <source>
        <strain>G9842</strain>
    </source>
</reference>
<feature type="chain" id="PRO_1000119194" description="Aminomethyltransferase">
    <location>
        <begin position="1"/>
        <end position="366"/>
    </location>
</feature>
<organism>
    <name type="scientific">Bacillus cereus (strain G9842)</name>
    <dbReference type="NCBI Taxonomy" id="405531"/>
    <lineage>
        <taxon>Bacteria</taxon>
        <taxon>Bacillati</taxon>
        <taxon>Bacillota</taxon>
        <taxon>Bacilli</taxon>
        <taxon>Bacillales</taxon>
        <taxon>Bacillaceae</taxon>
        <taxon>Bacillus</taxon>
        <taxon>Bacillus cereus group</taxon>
    </lineage>
</organism>
<gene>
    <name evidence="1" type="primary">gcvT</name>
    <name type="ordered locus">BCG9842_B0901</name>
</gene>
<comment type="function">
    <text evidence="1">The glycine cleavage system catalyzes the degradation of glycine.</text>
</comment>
<comment type="catalytic activity">
    <reaction evidence="1">
        <text>N(6)-[(R)-S(8)-aminomethyldihydrolipoyl]-L-lysyl-[protein] + (6S)-5,6,7,8-tetrahydrofolate = N(6)-[(R)-dihydrolipoyl]-L-lysyl-[protein] + (6R)-5,10-methylene-5,6,7,8-tetrahydrofolate + NH4(+)</text>
        <dbReference type="Rhea" id="RHEA:16945"/>
        <dbReference type="Rhea" id="RHEA-COMP:10475"/>
        <dbReference type="Rhea" id="RHEA-COMP:10492"/>
        <dbReference type="ChEBI" id="CHEBI:15636"/>
        <dbReference type="ChEBI" id="CHEBI:28938"/>
        <dbReference type="ChEBI" id="CHEBI:57453"/>
        <dbReference type="ChEBI" id="CHEBI:83100"/>
        <dbReference type="ChEBI" id="CHEBI:83143"/>
        <dbReference type="EC" id="2.1.2.10"/>
    </reaction>
</comment>
<comment type="subunit">
    <text evidence="1">The glycine cleavage system is composed of four proteins: P, T, L and H.</text>
</comment>
<comment type="similarity">
    <text evidence="1">Belongs to the GcvT family.</text>
</comment>
<accession>B7IXL4</accession>
<name>GCST_BACC2</name>
<protein>
    <recommendedName>
        <fullName evidence="1">Aminomethyltransferase</fullName>
        <ecNumber evidence="1">2.1.2.10</ecNumber>
    </recommendedName>
    <alternativeName>
        <fullName evidence="1">Glycine cleavage system T protein</fullName>
    </alternativeName>
</protein>
<proteinExistence type="inferred from homology"/>
<keyword id="KW-0032">Aminotransferase</keyword>
<keyword id="KW-0808">Transferase</keyword>
<evidence type="ECO:0000255" key="1">
    <source>
        <dbReference type="HAMAP-Rule" id="MF_00259"/>
    </source>
</evidence>
<sequence length="366" mass="40224">MITLQRTPLFDVYAKYGGKTIDFGGWELPVQFSSIKEEHEAVRTAAGLFDVSHMGEVEVKGVDSLAFLQRVVTNDVSTLKVGGAQYTAMCYENGGTVDDLLIYKRGEEDYLLVINASNIEKDYEWLASHVIGDATVVNVSSEVAQLAIQGPKAEGILQKVVSEDLKEIKFFKFKNNILVDGIPALVSRTGYTGEDGFEIYCKSEDAAKLWEKLLEVGAEEGLKACGLGARDTLRFEATLPLYGQELSKDITPIEAGIGFAVKTNKEADFFGKATLKEQKENGAPRKLVGIEVIERGIPRTHYPVFIGEEKIGEVTSGTQSPTLKKSIGLALIDVKYAAVDTEVEIEIRNKRVKAVVVPTPFYKRSK</sequence>